<dbReference type="EMBL" id="AL157959">
    <property type="protein sequence ID" value="CAM09262.1"/>
    <property type="molecule type" value="Genomic_DNA"/>
</dbReference>
<dbReference type="RefSeq" id="WP_002216391.1">
    <property type="nucleotide sequence ID" value="NC_003116.1"/>
</dbReference>
<dbReference type="SMR" id="P66150"/>
<dbReference type="DNASU" id="907281"/>
<dbReference type="EnsemblBacteria" id="CAM09262">
    <property type="protein sequence ID" value="CAM09262"/>
    <property type="gene ID" value="NMA2166"/>
</dbReference>
<dbReference type="GeneID" id="93387412"/>
<dbReference type="KEGG" id="nma:NMA2166"/>
<dbReference type="HOGENOM" id="CLU_064548_3_1_4"/>
<dbReference type="Proteomes" id="UP000000626">
    <property type="component" value="Chromosome"/>
</dbReference>
<dbReference type="GO" id="GO:0022625">
    <property type="term" value="C:cytosolic large ribosomal subunit"/>
    <property type="evidence" value="ECO:0007669"/>
    <property type="project" value="TreeGrafter"/>
</dbReference>
<dbReference type="GO" id="GO:0003735">
    <property type="term" value="F:structural constituent of ribosome"/>
    <property type="evidence" value="ECO:0007669"/>
    <property type="project" value="InterPro"/>
</dbReference>
<dbReference type="GO" id="GO:0006412">
    <property type="term" value="P:translation"/>
    <property type="evidence" value="ECO:0007669"/>
    <property type="project" value="UniProtKB-UniRule"/>
</dbReference>
<dbReference type="FunFam" id="2.30.170.40:FF:000001">
    <property type="entry name" value="50S ribosomal protein L28"/>
    <property type="match status" value="1"/>
</dbReference>
<dbReference type="Gene3D" id="2.30.170.40">
    <property type="entry name" value="Ribosomal protein L28/L24"/>
    <property type="match status" value="1"/>
</dbReference>
<dbReference type="HAMAP" id="MF_00373">
    <property type="entry name" value="Ribosomal_bL28"/>
    <property type="match status" value="1"/>
</dbReference>
<dbReference type="InterPro" id="IPR026569">
    <property type="entry name" value="Ribosomal_bL28"/>
</dbReference>
<dbReference type="InterPro" id="IPR034704">
    <property type="entry name" value="Ribosomal_bL28/bL31-like_sf"/>
</dbReference>
<dbReference type="InterPro" id="IPR001383">
    <property type="entry name" value="Ribosomal_bL28_bact-type"/>
</dbReference>
<dbReference type="InterPro" id="IPR037147">
    <property type="entry name" value="Ribosomal_bL28_sf"/>
</dbReference>
<dbReference type="NCBIfam" id="TIGR00009">
    <property type="entry name" value="L28"/>
    <property type="match status" value="1"/>
</dbReference>
<dbReference type="PANTHER" id="PTHR13528">
    <property type="entry name" value="39S RIBOSOMAL PROTEIN L28, MITOCHONDRIAL"/>
    <property type="match status" value="1"/>
</dbReference>
<dbReference type="PANTHER" id="PTHR13528:SF2">
    <property type="entry name" value="LARGE RIBOSOMAL SUBUNIT PROTEIN BL28M"/>
    <property type="match status" value="1"/>
</dbReference>
<dbReference type="Pfam" id="PF00830">
    <property type="entry name" value="Ribosomal_L28"/>
    <property type="match status" value="1"/>
</dbReference>
<dbReference type="SUPFAM" id="SSF143800">
    <property type="entry name" value="L28p-like"/>
    <property type="match status" value="1"/>
</dbReference>
<comment type="similarity">
    <text evidence="1">Belongs to the bacterial ribosomal protein bL28 family.</text>
</comment>
<name>RL28_NEIMA</name>
<reference key="1">
    <citation type="journal article" date="2000" name="Nature">
        <title>Complete DNA sequence of a serogroup A strain of Neisseria meningitidis Z2491.</title>
        <authorList>
            <person name="Parkhill J."/>
            <person name="Achtman M."/>
            <person name="James K.D."/>
            <person name="Bentley S.D."/>
            <person name="Churcher C.M."/>
            <person name="Klee S.R."/>
            <person name="Morelli G."/>
            <person name="Basham D."/>
            <person name="Brown D."/>
            <person name="Chillingworth T."/>
            <person name="Davies R.M."/>
            <person name="Davis P."/>
            <person name="Devlin K."/>
            <person name="Feltwell T."/>
            <person name="Hamlin N."/>
            <person name="Holroyd S."/>
            <person name="Jagels K."/>
            <person name="Leather S."/>
            <person name="Moule S."/>
            <person name="Mungall K.L."/>
            <person name="Quail M.A."/>
            <person name="Rajandream M.A."/>
            <person name="Rutherford K.M."/>
            <person name="Simmonds M."/>
            <person name="Skelton J."/>
            <person name="Whitehead S."/>
            <person name="Spratt B.G."/>
            <person name="Barrell B.G."/>
        </authorList>
    </citation>
    <scope>NUCLEOTIDE SEQUENCE [LARGE SCALE GENOMIC DNA]</scope>
    <source>
        <strain>DSM 15465 / Z2491</strain>
    </source>
</reference>
<gene>
    <name evidence="1" type="primary">rpmB</name>
    <name type="ordered locus">NMA2166</name>
</gene>
<sequence>MARVCKVTGKRPMSGNNVSHANNKTKRRFLPNLQSRRFWVESENRWVRLRVSNAALRTIDKVGIDVVLADLRARGEA</sequence>
<proteinExistence type="inferred from homology"/>
<feature type="chain" id="PRO_0000178515" description="Large ribosomal subunit protein bL28">
    <location>
        <begin position="1"/>
        <end position="77"/>
    </location>
</feature>
<feature type="region of interest" description="Disordered" evidence="2">
    <location>
        <begin position="1"/>
        <end position="26"/>
    </location>
</feature>
<organism>
    <name type="scientific">Neisseria meningitidis serogroup A / serotype 4A (strain DSM 15465 / Z2491)</name>
    <dbReference type="NCBI Taxonomy" id="122587"/>
    <lineage>
        <taxon>Bacteria</taxon>
        <taxon>Pseudomonadati</taxon>
        <taxon>Pseudomonadota</taxon>
        <taxon>Betaproteobacteria</taxon>
        <taxon>Neisseriales</taxon>
        <taxon>Neisseriaceae</taxon>
        <taxon>Neisseria</taxon>
    </lineage>
</organism>
<accession>P66150</accession>
<accession>A1ITZ3</accession>
<accession>Q9JQQ3</accession>
<protein>
    <recommendedName>
        <fullName evidence="1">Large ribosomal subunit protein bL28</fullName>
    </recommendedName>
    <alternativeName>
        <fullName evidence="3">50S ribosomal protein L28</fullName>
    </alternativeName>
</protein>
<evidence type="ECO:0000255" key="1">
    <source>
        <dbReference type="HAMAP-Rule" id="MF_00373"/>
    </source>
</evidence>
<evidence type="ECO:0000256" key="2">
    <source>
        <dbReference type="SAM" id="MobiDB-lite"/>
    </source>
</evidence>
<evidence type="ECO:0000305" key="3"/>
<keyword id="KW-0687">Ribonucleoprotein</keyword>
<keyword id="KW-0689">Ribosomal protein</keyword>